<comment type="function">
    <text evidence="4 6">Probable plus end-directed motor protein that functions in the NACK-PQR (NPK1-NQK1/MEK1-NRK1) MAP kinase signaling pathway, which is essential for somatic cell cytokinesis, especially for the cell-plate formation and its expansion. Regulates the activity and the localization of NPK1 by association through the non-catalytic region of the kinase.</text>
</comment>
<comment type="subunit">
    <text evidence="4 5 6">Interacts (via C-terminus) with NPK1 (via C-terminus).</text>
</comment>
<comment type="interaction">
    <interactant intactId="EBI-639977">
        <id>Q8S950</id>
    </interactant>
    <interactant intactId="EBI-639963">
        <id>Q40541</id>
        <label>NPK1</label>
    </interactant>
    <organismsDiffer>false</organismsDiffer>
    <experiments>6</experiments>
</comment>
<comment type="subcellular location">
    <subcellularLocation>
        <location evidence="4">Cytoplasm</location>
    </subcellularLocation>
    <subcellularLocation>
        <location evidence="4">Nucleus</location>
    </subcellularLocation>
    <subcellularLocation>
        <location evidence="4">Cytoplasm</location>
        <location evidence="4">Cytoskeleton</location>
        <location evidence="4">Phragmoplast</location>
    </subcellularLocation>
    <text>In interphase and prophase, detected in the nucleus. From prometaphase to metaphase, found in the cytoplasm in patches. At anaphase, distributed around the spindle midzone and on the phragmoplast equator at telophase.</text>
</comment>
<comment type="induction">
    <text evidence="4">During the M phase of the cell cycle (at protein level).</text>
</comment>
<comment type="PTM">
    <text evidence="6">Phosphorylated at Thr-145, Thr-675 and Thr-690 by CDKAs and CDKBs. The phosphorylation occurs before metaphase and inhibits the interaction with NPK1 preventing the transition to cytokinesis.</text>
</comment>
<comment type="miscellaneous">
    <text evidence="8">Expression of a truncated protein lacking the motor domain causes inhibition of phragmoplast expansion and multinucleate cells.</text>
</comment>
<comment type="similarity">
    <text evidence="7">Belongs to the TRAFAC class myosin-kinesin ATPase superfamily. Kinesin family. KIN-7 subfamily.</text>
</comment>
<evidence type="ECO:0000255" key="1"/>
<evidence type="ECO:0000255" key="2">
    <source>
        <dbReference type="PROSITE-ProRule" id="PRU00283"/>
    </source>
</evidence>
<evidence type="ECO:0000256" key="3">
    <source>
        <dbReference type="SAM" id="MobiDB-lite"/>
    </source>
</evidence>
<evidence type="ECO:0000269" key="4">
    <source>
    </source>
</evidence>
<evidence type="ECO:0000269" key="5">
    <source>
    </source>
</evidence>
<evidence type="ECO:0000269" key="6">
    <source>
    </source>
</evidence>
<evidence type="ECO:0000305" key="7"/>
<evidence type="ECO:0000305" key="8">
    <source>
    </source>
</evidence>
<accession>Q8S950</accession>
<sequence>MTVRTPGTPASKIDKTPATTPNGHRGREEKIVVTVRLRPLNKRELSAKDHAAWECIDDHTIIYRPVPQERAAQPASSFTFDKVFGPDSITEAVYEEGVKNVALSSLMGINATIFAYGQTSSGKTYTMRGITEKAVNDIYAHIMSTPEREFRIRISGLEIYNENVRDLLNSESGRSLKLLDDPEKGTVVEKLVEETASNDQHLRHLISICEAQRQVGETALNDTSSRSHQIIRLTIESTLRESSDCVRSYVASLNFVDLAGSERASQTNADGARLREGCHINLSLMTLTTVIRKLSVGKRSGHIPYRDSKLTRILQHSLGGNARTAIICTLSPASSHVEQSRNTLYFATRAKEVTNNAQVNMVVSDKQLVKHLQKEVARLEAELRTPDPANEKDWKIQQMEMEIEELKRQRDLAQSQVDELRRKLQEEQGPKPSESVSPVVKKCLSFSGTLSPNLEEKAPVRSERTRNTMGRQSMRQSLAAPFTLMHEIRKLEHLQEQLGDEANRALEVLQKEVACHRLGNQDAAETIAKLQAEIREMRSIRPLPKEVEVGSVVAVNKSVSANLKEEIARLHSQGSTIADLEEQLENVQKSLDKLVMSLPSNNDQQSNNDTTQKAKHPSKKKKLLPLTSSNSINRQNFLKSPCSPLSTARQVLDCEVENRAPDSDDLSCEIQPDETPTKSDGGDVSSKEGTPYRRSSSVNMRKMQKMFQEAAEENVRNIRSYVTELKERVAKLQYQKQLLVCQVLELEANEAAGYNLEDDENIHQIPEESPVSWQITFKEQRQQIIDLWDVCYVSIIHRSQFYLLFKGDPADEIYLEVELRRLTWLQQHLAELGNATPARVGNEPTVSLSSSIRALKREREFLAKRLTTRLTAEERDYLYIKWEVPLEGKQRRMQFINKLWTNPHDAKHVHESAEIVAKLVGFCEGGNMSREMFELNFVLPSDRRPWFAGWNQISDLLHI</sequence>
<organism>
    <name type="scientific">Nicotiana tabacum</name>
    <name type="common">Common tobacco</name>
    <dbReference type="NCBI Taxonomy" id="4097"/>
    <lineage>
        <taxon>Eukaryota</taxon>
        <taxon>Viridiplantae</taxon>
        <taxon>Streptophyta</taxon>
        <taxon>Embryophyta</taxon>
        <taxon>Tracheophyta</taxon>
        <taxon>Spermatophyta</taxon>
        <taxon>Magnoliopsida</taxon>
        <taxon>eudicotyledons</taxon>
        <taxon>Gunneridae</taxon>
        <taxon>Pentapetalae</taxon>
        <taxon>asterids</taxon>
        <taxon>lamiids</taxon>
        <taxon>Solanales</taxon>
        <taxon>Solanaceae</taxon>
        <taxon>Nicotianoideae</taxon>
        <taxon>Nicotianeae</taxon>
        <taxon>Nicotiana</taxon>
    </lineage>
</organism>
<reference key="1">
    <citation type="journal article" date="2002" name="Cell">
        <title>Expansion of the cell plate in plant cytokinesis requires a kinesin-like protein/MAPKKK complex.</title>
        <authorList>
            <person name="Nishihama R."/>
            <person name="Soyano T."/>
            <person name="Ishikawa M."/>
            <person name="Araki S."/>
            <person name="Tanaka H."/>
            <person name="Asada T."/>
            <person name="Irie K."/>
            <person name="Ito M."/>
            <person name="Terada M."/>
            <person name="Banno H."/>
            <person name="Yamazaki Y."/>
            <person name="Machida Y."/>
        </authorList>
    </citation>
    <scope>NUCLEOTIDE SEQUENCE [MRNA]</scope>
    <scope>FUNCTION</scope>
    <scope>SUBCELLULAR LOCATION</scope>
    <scope>INTERACTION WITH NPK1</scope>
    <scope>INDUCTION</scope>
    <source>
        <strain>cv. Bright Yellow 2</strain>
    </source>
</reference>
<reference key="2">
    <citation type="journal article" date="2002" name="Plant J.">
        <title>The NPK1 mitogen-activated protein kinase kinase kinase contains a functional nuclear localization signal at the binding site for the NACK1 kinesin-like protein.</title>
        <authorList>
            <person name="Ishikawa M."/>
            <person name="Soyano T."/>
            <person name="Nishihama R."/>
            <person name="Machida Y."/>
        </authorList>
    </citation>
    <scope>INTERACTION WITH NPK1</scope>
</reference>
<reference key="3">
    <citation type="journal article" date="2011" name="Proc. Natl. Acad. Sci. U.S.A.">
        <title>Phosphorylation of a mitotic kinesin-like protein and a MAPKKK by cyclin-dependent kinases (CDKs) is involved in the transition to cytokinesis in plants.</title>
        <authorList>
            <person name="Sasabe M."/>
            <person name="Boudolf V."/>
            <person name="De Veylder L."/>
            <person name="Inze D."/>
            <person name="Genschik P."/>
            <person name="Machida Y."/>
        </authorList>
    </citation>
    <scope>FUNCTION</scope>
    <scope>INTERACTION WITH NPK1</scope>
    <scope>PHOSPHORYLATION AT THR-145; THR-675 AND THR-690</scope>
</reference>
<proteinExistence type="evidence at protein level"/>
<name>KN7A_TOBAC</name>
<protein>
    <recommendedName>
        <fullName>Kinesin-like protein NACK1</fullName>
    </recommendedName>
    <alternativeName>
        <fullName>NPK1-activating kinesin-1</fullName>
    </alternativeName>
</protein>
<gene>
    <name type="primary">NACK1</name>
</gene>
<keyword id="KW-0067">ATP-binding</keyword>
<keyword id="KW-0131">Cell cycle</keyword>
<keyword id="KW-0132">Cell division</keyword>
<keyword id="KW-0175">Coiled coil</keyword>
<keyword id="KW-0963">Cytoplasm</keyword>
<keyword id="KW-0206">Cytoskeleton</keyword>
<keyword id="KW-0493">Microtubule</keyword>
<keyword id="KW-0505">Motor protein</keyword>
<keyword id="KW-0547">Nucleotide-binding</keyword>
<keyword id="KW-0539">Nucleus</keyword>
<keyword id="KW-0597">Phosphoprotein</keyword>
<keyword id="KW-1185">Reference proteome</keyword>
<dbReference type="EMBL" id="AB071435">
    <property type="protein sequence ID" value="BAB86283.1"/>
    <property type="molecule type" value="mRNA"/>
</dbReference>
<dbReference type="RefSeq" id="NP_001312228.1">
    <property type="nucleotide sequence ID" value="NM_001325299.1"/>
</dbReference>
<dbReference type="RefSeq" id="XP_016456327.1">
    <property type="nucleotide sequence ID" value="XM_016600841.1"/>
</dbReference>
<dbReference type="SMR" id="Q8S950"/>
<dbReference type="IntAct" id="Q8S950">
    <property type="interactions" value="1"/>
</dbReference>
<dbReference type="STRING" id="4097.Q8S950"/>
<dbReference type="iPTMnet" id="Q8S950"/>
<dbReference type="PaxDb" id="4097-Q8S950"/>
<dbReference type="GeneID" id="107780313"/>
<dbReference type="KEGG" id="nta:107780313"/>
<dbReference type="OMA" id="QVAWDCV"/>
<dbReference type="OrthoDB" id="1220964at2759"/>
<dbReference type="PhylomeDB" id="Q8S950"/>
<dbReference type="Proteomes" id="UP000084051">
    <property type="component" value="Unplaced"/>
</dbReference>
<dbReference type="GO" id="GO:0005874">
    <property type="term" value="C:microtubule"/>
    <property type="evidence" value="ECO:0007669"/>
    <property type="project" value="UniProtKB-KW"/>
</dbReference>
<dbReference type="GO" id="GO:0005634">
    <property type="term" value="C:nucleus"/>
    <property type="evidence" value="ECO:0007669"/>
    <property type="project" value="UniProtKB-SubCell"/>
</dbReference>
<dbReference type="GO" id="GO:0009524">
    <property type="term" value="C:phragmoplast"/>
    <property type="evidence" value="ECO:0000314"/>
    <property type="project" value="UniProtKB"/>
</dbReference>
<dbReference type="GO" id="GO:0005524">
    <property type="term" value="F:ATP binding"/>
    <property type="evidence" value="ECO:0007669"/>
    <property type="project" value="UniProtKB-KW"/>
</dbReference>
<dbReference type="GO" id="GO:0008017">
    <property type="term" value="F:microtubule binding"/>
    <property type="evidence" value="ECO:0007669"/>
    <property type="project" value="InterPro"/>
</dbReference>
<dbReference type="GO" id="GO:0003777">
    <property type="term" value="F:microtubule motor activity"/>
    <property type="evidence" value="ECO:0007669"/>
    <property type="project" value="InterPro"/>
</dbReference>
<dbReference type="GO" id="GO:0000919">
    <property type="term" value="P:cell plate assembly"/>
    <property type="evidence" value="ECO:0000316"/>
    <property type="project" value="UniProtKB"/>
</dbReference>
<dbReference type="GO" id="GO:0007018">
    <property type="term" value="P:microtubule-based movement"/>
    <property type="evidence" value="ECO:0007669"/>
    <property type="project" value="InterPro"/>
</dbReference>
<dbReference type="CDD" id="cd01374">
    <property type="entry name" value="KISc_CENP_E"/>
    <property type="match status" value="1"/>
</dbReference>
<dbReference type="FunFam" id="3.40.850.10:FF:000016">
    <property type="entry name" value="Kinesin-like protein"/>
    <property type="match status" value="1"/>
</dbReference>
<dbReference type="Gene3D" id="3.40.850.10">
    <property type="entry name" value="Kinesin motor domain"/>
    <property type="match status" value="1"/>
</dbReference>
<dbReference type="InterPro" id="IPR027640">
    <property type="entry name" value="Kinesin-like_fam"/>
</dbReference>
<dbReference type="InterPro" id="IPR019821">
    <property type="entry name" value="Kinesin_motor_CS"/>
</dbReference>
<dbReference type="InterPro" id="IPR001752">
    <property type="entry name" value="Kinesin_motor_dom"/>
</dbReference>
<dbReference type="InterPro" id="IPR036961">
    <property type="entry name" value="Kinesin_motor_dom_sf"/>
</dbReference>
<dbReference type="InterPro" id="IPR021881">
    <property type="entry name" value="NACK_C"/>
</dbReference>
<dbReference type="InterPro" id="IPR027417">
    <property type="entry name" value="P-loop_NTPase"/>
</dbReference>
<dbReference type="PANTHER" id="PTHR47968">
    <property type="entry name" value="CENTROMERE PROTEIN E"/>
    <property type="match status" value="1"/>
</dbReference>
<dbReference type="PANTHER" id="PTHR47968:SF23">
    <property type="entry name" value="KINESIN-LIKE PROTEIN KIN-7A"/>
    <property type="match status" value="1"/>
</dbReference>
<dbReference type="Pfam" id="PF11995">
    <property type="entry name" value="DUF3490"/>
    <property type="match status" value="1"/>
</dbReference>
<dbReference type="Pfam" id="PF00225">
    <property type="entry name" value="Kinesin"/>
    <property type="match status" value="1"/>
</dbReference>
<dbReference type="PRINTS" id="PR00380">
    <property type="entry name" value="KINESINHEAVY"/>
</dbReference>
<dbReference type="SMART" id="SM00129">
    <property type="entry name" value="KISc"/>
    <property type="match status" value="1"/>
</dbReference>
<dbReference type="SUPFAM" id="SSF52540">
    <property type="entry name" value="P-loop containing nucleoside triphosphate hydrolases"/>
    <property type="match status" value="1"/>
</dbReference>
<dbReference type="PROSITE" id="PS00411">
    <property type="entry name" value="KINESIN_MOTOR_1"/>
    <property type="match status" value="1"/>
</dbReference>
<dbReference type="PROSITE" id="PS50067">
    <property type="entry name" value="KINESIN_MOTOR_2"/>
    <property type="match status" value="1"/>
</dbReference>
<feature type="chain" id="PRO_0000422318" description="Kinesin-like protein NACK1">
    <location>
        <begin position="1"/>
        <end position="959"/>
    </location>
</feature>
<feature type="domain" description="Kinesin motor" evidence="2">
    <location>
        <begin position="30"/>
        <end position="353"/>
    </location>
</feature>
<feature type="region of interest" description="Disordered" evidence="3">
    <location>
        <begin position="1"/>
        <end position="28"/>
    </location>
</feature>
<feature type="region of interest" description="Disordered" evidence="3">
    <location>
        <begin position="417"/>
        <end position="438"/>
    </location>
</feature>
<feature type="region of interest" description="Disordered" evidence="3">
    <location>
        <begin position="451"/>
        <end position="473"/>
    </location>
</feature>
<feature type="region of interest" description="Disordered" evidence="3">
    <location>
        <begin position="598"/>
        <end position="640"/>
    </location>
</feature>
<feature type="region of interest" description="Disordered" evidence="3">
    <location>
        <begin position="658"/>
        <end position="700"/>
    </location>
</feature>
<feature type="region of interest" description="Required for the binding to NPK1" evidence="5">
    <location>
        <begin position="685"/>
        <end position="756"/>
    </location>
</feature>
<feature type="coiled-coil region" evidence="1">
    <location>
        <begin position="362"/>
        <end position="429"/>
    </location>
</feature>
<feature type="coiled-coil region" evidence="1">
    <location>
        <begin position="557"/>
        <end position="598"/>
    </location>
</feature>
<feature type="compositionally biased region" description="Basic and acidic residues" evidence="3">
    <location>
        <begin position="418"/>
        <end position="429"/>
    </location>
</feature>
<feature type="compositionally biased region" description="Basic and acidic residues" evidence="3">
    <location>
        <begin position="454"/>
        <end position="466"/>
    </location>
</feature>
<feature type="compositionally biased region" description="Low complexity" evidence="3">
    <location>
        <begin position="600"/>
        <end position="611"/>
    </location>
</feature>
<feature type="compositionally biased region" description="Basic residues" evidence="3">
    <location>
        <begin position="613"/>
        <end position="623"/>
    </location>
</feature>
<feature type="compositionally biased region" description="Polar residues" evidence="3">
    <location>
        <begin position="630"/>
        <end position="640"/>
    </location>
</feature>
<feature type="binding site" evidence="2">
    <location>
        <begin position="117"/>
        <end position="124"/>
    </location>
    <ligand>
        <name>ATP</name>
        <dbReference type="ChEBI" id="CHEBI:30616"/>
    </ligand>
</feature>
<feature type="modified residue" description="Phosphothreonine" evidence="6">
    <location>
        <position position="145"/>
    </location>
</feature>
<feature type="modified residue" description="Phosphothreonine" evidence="6">
    <location>
        <position position="675"/>
    </location>
</feature>
<feature type="modified residue" description="Phosphothreonine" evidence="6">
    <location>
        <position position="690"/>
    </location>
</feature>